<feature type="chain" id="PRO_1000010711" description="Elongation factor P">
    <location>
        <begin position="1"/>
        <end position="185"/>
    </location>
</feature>
<accession>Q3AAZ2</accession>
<gene>
    <name evidence="1" type="primary">efp</name>
    <name type="ordered locus">CHY_1872</name>
</gene>
<comment type="function">
    <text evidence="1">Involved in peptide bond synthesis. Stimulates efficient translation and peptide-bond synthesis on native or reconstituted 70S ribosomes in vitro. Probably functions indirectly by altering the affinity of the ribosome for aminoacyl-tRNA, thus increasing their reactivity as acceptors for peptidyl transferase.</text>
</comment>
<comment type="pathway">
    <text evidence="1">Protein biosynthesis; polypeptide chain elongation.</text>
</comment>
<comment type="subcellular location">
    <subcellularLocation>
        <location evidence="1">Cytoplasm</location>
    </subcellularLocation>
</comment>
<comment type="similarity">
    <text evidence="1">Belongs to the elongation factor P family.</text>
</comment>
<sequence length="185" mass="20928">MISTNDFRTGLTIELDGEVYQVIEFQHVKPGKGSPFVRSKLRNLMTGAVIEKTFNAGEKVPKAHVDRREVQYLYNDGDNFYCMDMETYDQFPLTKEQFGDAINYVKENTNLWVLFFKDKVIGVELPNFVELKVIDTPPGIKGDTASGGSKPATLETGYVVQVPFFVEVGDVLQIDTRTGQYIKRV</sequence>
<keyword id="KW-0963">Cytoplasm</keyword>
<keyword id="KW-0251">Elongation factor</keyword>
<keyword id="KW-0648">Protein biosynthesis</keyword>
<keyword id="KW-1185">Reference proteome</keyword>
<proteinExistence type="inferred from homology"/>
<name>EFP_CARHZ</name>
<reference key="1">
    <citation type="journal article" date="2005" name="PLoS Genet.">
        <title>Life in hot carbon monoxide: the complete genome sequence of Carboxydothermus hydrogenoformans Z-2901.</title>
        <authorList>
            <person name="Wu M."/>
            <person name="Ren Q."/>
            <person name="Durkin A.S."/>
            <person name="Daugherty S.C."/>
            <person name="Brinkac L.M."/>
            <person name="Dodson R.J."/>
            <person name="Madupu R."/>
            <person name="Sullivan S.A."/>
            <person name="Kolonay J.F."/>
            <person name="Nelson W.C."/>
            <person name="Tallon L.J."/>
            <person name="Jones K.M."/>
            <person name="Ulrich L.E."/>
            <person name="Gonzalez J.M."/>
            <person name="Zhulin I.B."/>
            <person name="Robb F.T."/>
            <person name="Eisen J.A."/>
        </authorList>
    </citation>
    <scope>NUCLEOTIDE SEQUENCE [LARGE SCALE GENOMIC DNA]</scope>
    <source>
        <strain>ATCC BAA-161 / DSM 6008 / Z-2901</strain>
    </source>
</reference>
<dbReference type="EMBL" id="CP000141">
    <property type="protein sequence ID" value="ABB14488.1"/>
    <property type="molecule type" value="Genomic_DNA"/>
</dbReference>
<dbReference type="RefSeq" id="WP_011344766.1">
    <property type="nucleotide sequence ID" value="NC_007503.1"/>
</dbReference>
<dbReference type="SMR" id="Q3AAZ2"/>
<dbReference type="FunCoup" id="Q3AAZ2">
    <property type="interactions" value="439"/>
</dbReference>
<dbReference type="STRING" id="246194.CHY_1872"/>
<dbReference type="KEGG" id="chy:CHY_1872"/>
<dbReference type="eggNOG" id="COG0231">
    <property type="taxonomic scope" value="Bacteria"/>
</dbReference>
<dbReference type="HOGENOM" id="CLU_074944_0_1_9"/>
<dbReference type="InParanoid" id="Q3AAZ2"/>
<dbReference type="OrthoDB" id="9801844at2"/>
<dbReference type="UniPathway" id="UPA00345"/>
<dbReference type="Proteomes" id="UP000002706">
    <property type="component" value="Chromosome"/>
</dbReference>
<dbReference type="GO" id="GO:0005737">
    <property type="term" value="C:cytoplasm"/>
    <property type="evidence" value="ECO:0007669"/>
    <property type="project" value="UniProtKB-SubCell"/>
</dbReference>
<dbReference type="GO" id="GO:0003746">
    <property type="term" value="F:translation elongation factor activity"/>
    <property type="evidence" value="ECO:0007669"/>
    <property type="project" value="UniProtKB-UniRule"/>
</dbReference>
<dbReference type="GO" id="GO:0043043">
    <property type="term" value="P:peptide biosynthetic process"/>
    <property type="evidence" value="ECO:0007669"/>
    <property type="project" value="InterPro"/>
</dbReference>
<dbReference type="CDD" id="cd04470">
    <property type="entry name" value="S1_EF-P_repeat_1"/>
    <property type="match status" value="1"/>
</dbReference>
<dbReference type="CDD" id="cd05794">
    <property type="entry name" value="S1_EF-P_repeat_2"/>
    <property type="match status" value="1"/>
</dbReference>
<dbReference type="FunFam" id="2.30.30.30:FF:000003">
    <property type="entry name" value="Elongation factor P"/>
    <property type="match status" value="1"/>
</dbReference>
<dbReference type="FunFam" id="2.40.50.140:FF:000004">
    <property type="entry name" value="Elongation factor P"/>
    <property type="match status" value="1"/>
</dbReference>
<dbReference type="FunFam" id="2.40.50.140:FF:000009">
    <property type="entry name" value="Elongation factor P"/>
    <property type="match status" value="1"/>
</dbReference>
<dbReference type="Gene3D" id="2.30.30.30">
    <property type="match status" value="1"/>
</dbReference>
<dbReference type="Gene3D" id="2.40.50.140">
    <property type="entry name" value="Nucleic acid-binding proteins"/>
    <property type="match status" value="2"/>
</dbReference>
<dbReference type="HAMAP" id="MF_00141">
    <property type="entry name" value="EF_P"/>
    <property type="match status" value="1"/>
</dbReference>
<dbReference type="InterPro" id="IPR015365">
    <property type="entry name" value="Elong-fact-P_C"/>
</dbReference>
<dbReference type="InterPro" id="IPR012340">
    <property type="entry name" value="NA-bd_OB-fold"/>
</dbReference>
<dbReference type="InterPro" id="IPR014722">
    <property type="entry name" value="Rib_uL2_dom2"/>
</dbReference>
<dbReference type="InterPro" id="IPR020599">
    <property type="entry name" value="Transl_elong_fac_P/YeiP"/>
</dbReference>
<dbReference type="InterPro" id="IPR013185">
    <property type="entry name" value="Transl_elong_KOW-like"/>
</dbReference>
<dbReference type="InterPro" id="IPR001059">
    <property type="entry name" value="Transl_elong_P/YeiP_cen"/>
</dbReference>
<dbReference type="InterPro" id="IPR013852">
    <property type="entry name" value="Transl_elong_P/YeiP_CS"/>
</dbReference>
<dbReference type="InterPro" id="IPR011768">
    <property type="entry name" value="Transl_elongation_fac_P"/>
</dbReference>
<dbReference type="InterPro" id="IPR008991">
    <property type="entry name" value="Translation_prot_SH3-like_sf"/>
</dbReference>
<dbReference type="NCBIfam" id="TIGR00038">
    <property type="entry name" value="efp"/>
    <property type="match status" value="1"/>
</dbReference>
<dbReference type="NCBIfam" id="NF001810">
    <property type="entry name" value="PRK00529.1"/>
    <property type="match status" value="1"/>
</dbReference>
<dbReference type="PANTHER" id="PTHR30053">
    <property type="entry name" value="ELONGATION FACTOR P"/>
    <property type="match status" value="1"/>
</dbReference>
<dbReference type="PANTHER" id="PTHR30053:SF12">
    <property type="entry name" value="ELONGATION FACTOR P (EF-P) FAMILY PROTEIN"/>
    <property type="match status" value="1"/>
</dbReference>
<dbReference type="Pfam" id="PF01132">
    <property type="entry name" value="EFP"/>
    <property type="match status" value="1"/>
</dbReference>
<dbReference type="Pfam" id="PF08207">
    <property type="entry name" value="EFP_N"/>
    <property type="match status" value="1"/>
</dbReference>
<dbReference type="Pfam" id="PF09285">
    <property type="entry name" value="Elong-fact-P_C"/>
    <property type="match status" value="1"/>
</dbReference>
<dbReference type="PIRSF" id="PIRSF005901">
    <property type="entry name" value="EF-P"/>
    <property type="match status" value="1"/>
</dbReference>
<dbReference type="SMART" id="SM01185">
    <property type="entry name" value="EFP"/>
    <property type="match status" value="1"/>
</dbReference>
<dbReference type="SMART" id="SM00841">
    <property type="entry name" value="Elong-fact-P_C"/>
    <property type="match status" value="1"/>
</dbReference>
<dbReference type="SUPFAM" id="SSF50249">
    <property type="entry name" value="Nucleic acid-binding proteins"/>
    <property type="match status" value="2"/>
</dbReference>
<dbReference type="SUPFAM" id="SSF50104">
    <property type="entry name" value="Translation proteins SH3-like domain"/>
    <property type="match status" value="1"/>
</dbReference>
<dbReference type="PROSITE" id="PS01275">
    <property type="entry name" value="EFP"/>
    <property type="match status" value="1"/>
</dbReference>
<protein>
    <recommendedName>
        <fullName evidence="1">Elongation factor P</fullName>
        <shortName evidence="1">EF-P</shortName>
    </recommendedName>
</protein>
<evidence type="ECO:0000255" key="1">
    <source>
        <dbReference type="HAMAP-Rule" id="MF_00141"/>
    </source>
</evidence>
<organism>
    <name type="scientific">Carboxydothermus hydrogenoformans (strain ATCC BAA-161 / DSM 6008 / Z-2901)</name>
    <dbReference type="NCBI Taxonomy" id="246194"/>
    <lineage>
        <taxon>Bacteria</taxon>
        <taxon>Bacillati</taxon>
        <taxon>Bacillota</taxon>
        <taxon>Clostridia</taxon>
        <taxon>Thermoanaerobacterales</taxon>
        <taxon>Thermoanaerobacteraceae</taxon>
        <taxon>Carboxydothermus</taxon>
    </lineage>
</organism>